<accession>Q167Z6</accession>
<organism>
    <name type="scientific">Roseobacter denitrificans (strain ATCC 33942 / OCh 114)</name>
    <name type="common">Erythrobacter sp. (strain OCh 114)</name>
    <name type="synonym">Roseobacter denitrificans</name>
    <dbReference type="NCBI Taxonomy" id="375451"/>
    <lineage>
        <taxon>Bacteria</taxon>
        <taxon>Pseudomonadati</taxon>
        <taxon>Pseudomonadota</taxon>
        <taxon>Alphaproteobacteria</taxon>
        <taxon>Rhodobacterales</taxon>
        <taxon>Roseobacteraceae</taxon>
        <taxon>Roseobacter</taxon>
    </lineage>
</organism>
<comment type="function">
    <text evidence="1">Part of the Tol-Pal system, which plays a role in outer membrane invagination during cell division and is important for maintaining outer membrane integrity.</text>
</comment>
<comment type="subunit">
    <text evidence="1">The Tol-Pal system is composed of five core proteins: the inner membrane proteins TolA, TolQ and TolR, the periplasmic protein TolB and the outer membrane protein Pal. They form a network linking the inner and outer membranes and the peptidoglycan layer.</text>
</comment>
<comment type="subcellular location">
    <subcellularLocation>
        <location evidence="1">Periplasm</location>
    </subcellularLocation>
</comment>
<comment type="similarity">
    <text evidence="1">Belongs to the TolB family.</text>
</comment>
<keyword id="KW-0131">Cell cycle</keyword>
<keyword id="KW-0132">Cell division</keyword>
<keyword id="KW-0574">Periplasm</keyword>
<keyword id="KW-1185">Reference proteome</keyword>
<keyword id="KW-0732">Signal</keyword>
<evidence type="ECO:0000255" key="1">
    <source>
        <dbReference type="HAMAP-Rule" id="MF_00671"/>
    </source>
</evidence>
<evidence type="ECO:0000256" key="2">
    <source>
        <dbReference type="SAM" id="MobiDB-lite"/>
    </source>
</evidence>
<name>TOLB_ROSDO</name>
<gene>
    <name evidence="1" type="primary">tolB</name>
    <name type="ordered locus">RD1_2097</name>
</gene>
<dbReference type="EMBL" id="CP000362">
    <property type="protein sequence ID" value="ABG31697.1"/>
    <property type="molecule type" value="Genomic_DNA"/>
</dbReference>
<dbReference type="RefSeq" id="WP_011568314.1">
    <property type="nucleotide sequence ID" value="NC_008209.1"/>
</dbReference>
<dbReference type="SMR" id="Q167Z6"/>
<dbReference type="STRING" id="375451.RD1_2097"/>
<dbReference type="KEGG" id="rde:RD1_2097"/>
<dbReference type="eggNOG" id="COG0823">
    <property type="taxonomic scope" value="Bacteria"/>
</dbReference>
<dbReference type="HOGENOM" id="CLU_047123_0_0_5"/>
<dbReference type="OrthoDB" id="9802240at2"/>
<dbReference type="Proteomes" id="UP000007029">
    <property type="component" value="Chromosome"/>
</dbReference>
<dbReference type="GO" id="GO:0042597">
    <property type="term" value="C:periplasmic space"/>
    <property type="evidence" value="ECO:0007669"/>
    <property type="project" value="UniProtKB-SubCell"/>
</dbReference>
<dbReference type="GO" id="GO:0051301">
    <property type="term" value="P:cell division"/>
    <property type="evidence" value="ECO:0007669"/>
    <property type="project" value="UniProtKB-UniRule"/>
</dbReference>
<dbReference type="GO" id="GO:0017038">
    <property type="term" value="P:protein import"/>
    <property type="evidence" value="ECO:0007669"/>
    <property type="project" value="InterPro"/>
</dbReference>
<dbReference type="Gene3D" id="2.120.10.30">
    <property type="entry name" value="TolB, C-terminal domain"/>
    <property type="match status" value="1"/>
</dbReference>
<dbReference type="Gene3D" id="3.40.50.10070">
    <property type="entry name" value="TolB, N-terminal domain"/>
    <property type="match status" value="1"/>
</dbReference>
<dbReference type="HAMAP" id="MF_00671">
    <property type="entry name" value="TolB"/>
    <property type="match status" value="1"/>
</dbReference>
<dbReference type="InterPro" id="IPR011042">
    <property type="entry name" value="6-blade_b-propeller_TolB-like"/>
</dbReference>
<dbReference type="InterPro" id="IPR011659">
    <property type="entry name" value="PD40"/>
</dbReference>
<dbReference type="InterPro" id="IPR014167">
    <property type="entry name" value="Tol-Pal_TolB"/>
</dbReference>
<dbReference type="InterPro" id="IPR007195">
    <property type="entry name" value="TolB_N"/>
</dbReference>
<dbReference type="NCBIfam" id="TIGR02800">
    <property type="entry name" value="propeller_TolB"/>
    <property type="match status" value="1"/>
</dbReference>
<dbReference type="PANTHER" id="PTHR36842:SF1">
    <property type="entry name" value="PROTEIN TOLB"/>
    <property type="match status" value="1"/>
</dbReference>
<dbReference type="PANTHER" id="PTHR36842">
    <property type="entry name" value="PROTEIN TOLB HOMOLOG"/>
    <property type="match status" value="1"/>
</dbReference>
<dbReference type="Pfam" id="PF07676">
    <property type="entry name" value="PD40"/>
    <property type="match status" value="4"/>
</dbReference>
<dbReference type="Pfam" id="PF04052">
    <property type="entry name" value="TolB_N"/>
    <property type="match status" value="1"/>
</dbReference>
<dbReference type="SUPFAM" id="SSF52964">
    <property type="entry name" value="TolB, N-terminal domain"/>
    <property type="match status" value="1"/>
</dbReference>
<dbReference type="SUPFAM" id="SSF69304">
    <property type="entry name" value="Tricorn protease N-terminal domain"/>
    <property type="match status" value="1"/>
</dbReference>
<proteinExistence type="inferred from homology"/>
<sequence length="443" mass="48083">MSFQIRVFTAILAVLSLFTAPVLAQNSGPLRIEITEGVIEPLPFALPVFEAETADAADVAAQITQVIAADLTGTGLFRQIEPDAFISTVSSFAAPIQYADWKAINAQALITGAVAVQGNQLNVKFRLYDVFSGAEMGDGLQFSATPDGWRRMAHKVADAVYSRITGEGGYFDSRVVYVSETGTKDARQKRLAIMDYDGANVKYLTDSSSIVLAPRFSPDGQRILYTSYETGFPRIYVLDVTSLQRRGLESQEGTMSFAPRFAPDGQTIVFSLSQGGNTDIYRMNVNGGSATRLTSAPSIETAPSYSPDGTQIVFESDRSGSQQLYVMPANGGEARRISFGPGRYGTPVWSPRGDLVAFTKQNAGRFHIGVMRLDGSEERLLTASFLDEGPTWSPNGRVIMFSRETQGAQGRATLYSVDITGRNLRPVRTPEGGSDPSWSPLQR</sequence>
<reference key="1">
    <citation type="journal article" date="2007" name="J. Bacteriol.">
        <title>The complete genome sequence of Roseobacter denitrificans reveals a mixotrophic rather than photosynthetic metabolism.</title>
        <authorList>
            <person name="Swingley W.D."/>
            <person name="Sadekar S."/>
            <person name="Mastrian S.D."/>
            <person name="Matthies H.J."/>
            <person name="Hao J."/>
            <person name="Ramos H."/>
            <person name="Acharya C.R."/>
            <person name="Conrad A.L."/>
            <person name="Taylor H.L."/>
            <person name="Dejesa L.C."/>
            <person name="Shah M.K."/>
            <person name="O'Huallachain M.E."/>
            <person name="Lince M.T."/>
            <person name="Blankenship R.E."/>
            <person name="Beatty J.T."/>
            <person name="Touchman J.W."/>
        </authorList>
    </citation>
    <scope>NUCLEOTIDE SEQUENCE [LARGE SCALE GENOMIC DNA]</scope>
    <source>
        <strain>ATCC 33942 / OCh 114</strain>
    </source>
</reference>
<protein>
    <recommendedName>
        <fullName evidence="1">Tol-Pal system protein TolB</fullName>
    </recommendedName>
</protein>
<feature type="signal peptide" evidence="1">
    <location>
        <begin position="1"/>
        <end position="24"/>
    </location>
</feature>
<feature type="chain" id="PRO_0000259085" description="Tol-Pal system protein TolB" evidence="1">
    <location>
        <begin position="25"/>
        <end position="443"/>
    </location>
</feature>
<feature type="region of interest" description="Disordered" evidence="2">
    <location>
        <begin position="424"/>
        <end position="443"/>
    </location>
</feature>